<protein>
    <recommendedName>
        <fullName evidence="1">5-oxoprolinase subunit A</fullName>
        <shortName evidence="1">5-OPase subunit A</shortName>
        <ecNumber evidence="1">3.5.2.9</ecNumber>
    </recommendedName>
    <alternativeName>
        <fullName evidence="1">5-oxoprolinase (ATP-hydrolyzing) subunit A</fullName>
    </alternativeName>
</protein>
<feature type="chain" id="PRO_0000185066" description="5-oxoprolinase subunit A">
    <location>
        <begin position="1"/>
        <end position="255"/>
    </location>
</feature>
<feature type="strand" evidence="2">
    <location>
        <begin position="2"/>
        <end position="9"/>
    </location>
</feature>
<feature type="helix" evidence="2">
    <location>
        <begin position="21"/>
        <end position="24"/>
    </location>
</feature>
<feature type="turn" evidence="2">
    <location>
        <begin position="25"/>
        <end position="27"/>
    </location>
</feature>
<feature type="strand" evidence="2">
    <location>
        <begin position="29"/>
        <end position="34"/>
    </location>
</feature>
<feature type="strand" evidence="2">
    <location>
        <begin position="36"/>
        <end position="39"/>
    </location>
</feature>
<feature type="helix" evidence="2">
    <location>
        <begin position="42"/>
        <end position="54"/>
    </location>
</feature>
<feature type="strand" evidence="2">
    <location>
        <begin position="58"/>
        <end position="62"/>
    </location>
</feature>
<feature type="turn" evidence="2">
    <location>
        <begin position="68"/>
        <end position="72"/>
    </location>
</feature>
<feature type="helix" evidence="2">
    <location>
        <begin position="80"/>
        <end position="100"/>
    </location>
</feature>
<feature type="strand" evidence="2">
    <location>
        <begin position="105"/>
        <end position="108"/>
    </location>
</feature>
<feature type="helix" evidence="2">
    <location>
        <begin position="112"/>
        <end position="120"/>
    </location>
</feature>
<feature type="helix" evidence="2">
    <location>
        <begin position="122"/>
        <end position="135"/>
    </location>
</feature>
<feature type="strand" evidence="2">
    <location>
        <begin position="140"/>
        <end position="144"/>
    </location>
</feature>
<feature type="helix" evidence="2">
    <location>
        <begin position="148"/>
        <end position="156"/>
    </location>
</feature>
<feature type="strand" evidence="2">
    <location>
        <begin position="160"/>
        <end position="164"/>
    </location>
</feature>
<feature type="strand" evidence="2">
    <location>
        <begin position="168"/>
        <end position="170"/>
    </location>
</feature>
<feature type="strand" evidence="2">
    <location>
        <begin position="176"/>
        <end position="178"/>
    </location>
</feature>
<feature type="helix" evidence="2">
    <location>
        <begin position="189"/>
        <end position="202"/>
    </location>
</feature>
<feature type="strand" evidence="2">
    <location>
        <begin position="203"/>
        <end position="206"/>
    </location>
</feature>
<feature type="strand" evidence="2">
    <location>
        <begin position="212"/>
        <end position="214"/>
    </location>
</feature>
<feature type="strand" evidence="2">
    <location>
        <begin position="218"/>
        <end position="221"/>
    </location>
</feature>
<feature type="helix" evidence="2">
    <location>
        <begin position="227"/>
        <end position="242"/>
    </location>
</feature>
<feature type="helix" evidence="2">
    <location>
        <begin position="250"/>
        <end position="252"/>
    </location>
</feature>
<accession>O58714</accession>
<dbReference type="EC" id="3.5.2.9" evidence="1"/>
<dbReference type="EMBL" id="BA000001">
    <property type="protein sequence ID" value="BAA30083.1"/>
    <property type="molecule type" value="Genomic_DNA"/>
</dbReference>
<dbReference type="PIR" id="E71090">
    <property type="entry name" value="E71090"/>
</dbReference>
<dbReference type="RefSeq" id="WP_010885076.1">
    <property type="nucleotide sequence ID" value="NC_000961.1"/>
</dbReference>
<dbReference type="PDB" id="1V6T">
    <property type="method" value="X-ray"/>
    <property type="resolution" value="1.70 A"/>
    <property type="chains" value="A=1-255"/>
</dbReference>
<dbReference type="PDBsum" id="1V6T"/>
<dbReference type="SMR" id="O58714"/>
<dbReference type="MINT" id="O58714"/>
<dbReference type="STRING" id="70601.gene:9377942"/>
<dbReference type="EnsemblBacteria" id="BAA30083">
    <property type="protein sequence ID" value="BAA30083"/>
    <property type="gene ID" value="BAA30083"/>
</dbReference>
<dbReference type="GeneID" id="1443311"/>
<dbReference type="KEGG" id="pho:PH0986"/>
<dbReference type="eggNOG" id="arCOG05810">
    <property type="taxonomic scope" value="Archaea"/>
</dbReference>
<dbReference type="OrthoDB" id="84497at2157"/>
<dbReference type="EvolutionaryTrace" id="O58714"/>
<dbReference type="Proteomes" id="UP000000752">
    <property type="component" value="Chromosome"/>
</dbReference>
<dbReference type="GO" id="GO:0017168">
    <property type="term" value="F:5-oxoprolinase (ATP-hydrolyzing) activity"/>
    <property type="evidence" value="ECO:0007669"/>
    <property type="project" value="UniProtKB-UniRule"/>
</dbReference>
<dbReference type="GO" id="GO:0005524">
    <property type="term" value="F:ATP binding"/>
    <property type="evidence" value="ECO:0007669"/>
    <property type="project" value="UniProtKB-UniRule"/>
</dbReference>
<dbReference type="GO" id="GO:0005975">
    <property type="term" value="P:carbohydrate metabolic process"/>
    <property type="evidence" value="ECO:0007669"/>
    <property type="project" value="InterPro"/>
</dbReference>
<dbReference type="CDD" id="cd10787">
    <property type="entry name" value="LamB_YcsF_like"/>
    <property type="match status" value="1"/>
</dbReference>
<dbReference type="Gene3D" id="3.20.20.370">
    <property type="entry name" value="Glycoside hydrolase/deacetylase"/>
    <property type="match status" value="1"/>
</dbReference>
<dbReference type="HAMAP" id="MF_00691">
    <property type="entry name" value="PxpA"/>
    <property type="match status" value="1"/>
</dbReference>
<dbReference type="InterPro" id="IPR011330">
    <property type="entry name" value="Glyco_hydro/deAcase_b/a-brl"/>
</dbReference>
<dbReference type="InterPro" id="IPR005501">
    <property type="entry name" value="LamB/YcsF/PxpA-like"/>
</dbReference>
<dbReference type="NCBIfam" id="NF003814">
    <property type="entry name" value="PRK05406.1-3"/>
    <property type="match status" value="1"/>
</dbReference>
<dbReference type="NCBIfam" id="NF003816">
    <property type="entry name" value="PRK05406.1-5"/>
    <property type="match status" value="1"/>
</dbReference>
<dbReference type="PANTHER" id="PTHR30292:SF0">
    <property type="entry name" value="5-OXOPROLINASE SUBUNIT A"/>
    <property type="match status" value="1"/>
</dbReference>
<dbReference type="PANTHER" id="PTHR30292">
    <property type="entry name" value="UNCHARACTERIZED PROTEIN YBGL-RELATED"/>
    <property type="match status" value="1"/>
</dbReference>
<dbReference type="Pfam" id="PF03746">
    <property type="entry name" value="LamB_YcsF"/>
    <property type="match status" value="1"/>
</dbReference>
<dbReference type="SUPFAM" id="SSF88713">
    <property type="entry name" value="Glycoside hydrolase/deacetylase"/>
    <property type="match status" value="1"/>
</dbReference>
<evidence type="ECO:0000255" key="1">
    <source>
        <dbReference type="HAMAP-Rule" id="MF_00691"/>
    </source>
</evidence>
<evidence type="ECO:0007829" key="2">
    <source>
        <dbReference type="PDB" id="1V6T"/>
    </source>
</evidence>
<organism>
    <name type="scientific">Pyrococcus horikoshii (strain ATCC 700860 / DSM 12428 / JCM 9974 / NBRC 100139 / OT-3)</name>
    <dbReference type="NCBI Taxonomy" id="70601"/>
    <lineage>
        <taxon>Archaea</taxon>
        <taxon>Methanobacteriati</taxon>
        <taxon>Methanobacteriota</taxon>
        <taxon>Thermococci</taxon>
        <taxon>Thermococcales</taxon>
        <taxon>Thermococcaceae</taxon>
        <taxon>Pyrococcus</taxon>
    </lineage>
</organism>
<sequence>MRVDLNSDLGESFGRYKLGLDEEVMKYITSANVACGWHAGDPLVMRKTVRLAKENDVQVGAHPGYPDLMGFGRRYMKLTPEEARNYILYQVGALYAFAKAEGLELQHVKPHGALYNAMVKEEDLARAVIEGILDFDKDLILVTLSNSRVADIAEEMGLKVAHEVFADRAYNPDGTLVPRGRPGAVIEDKEEIAERVISMVKDGGIRAINGEWVDLKVDTICVHGDNPKAVEITSYIRKVLEEEGVKIVPMKEFIR</sequence>
<reference key="1">
    <citation type="journal article" date="1998" name="DNA Res.">
        <title>Complete sequence and gene organization of the genome of a hyper-thermophilic archaebacterium, Pyrococcus horikoshii OT3.</title>
        <authorList>
            <person name="Kawarabayasi Y."/>
            <person name="Sawada M."/>
            <person name="Horikawa H."/>
            <person name="Haikawa Y."/>
            <person name="Hino Y."/>
            <person name="Yamamoto S."/>
            <person name="Sekine M."/>
            <person name="Baba S."/>
            <person name="Kosugi H."/>
            <person name="Hosoyama A."/>
            <person name="Nagai Y."/>
            <person name="Sakai M."/>
            <person name="Ogura K."/>
            <person name="Otsuka R."/>
            <person name="Nakazawa H."/>
            <person name="Takamiya M."/>
            <person name="Ohfuku Y."/>
            <person name="Funahashi T."/>
            <person name="Tanaka T."/>
            <person name="Kudoh Y."/>
            <person name="Yamazaki J."/>
            <person name="Kushida N."/>
            <person name="Oguchi A."/>
            <person name="Aoki K."/>
            <person name="Yoshizawa T."/>
            <person name="Nakamura Y."/>
            <person name="Robb F.T."/>
            <person name="Horikoshi K."/>
            <person name="Masuchi Y."/>
            <person name="Shizuya H."/>
            <person name="Kikuchi H."/>
        </authorList>
    </citation>
    <scope>NUCLEOTIDE SEQUENCE [LARGE SCALE GENOMIC DNA]</scope>
    <source>
        <strain>ATCC 700860 / DSM 12428 / JCM 9974 / NBRC 100139 / OT-3</strain>
    </source>
</reference>
<reference key="2">
    <citation type="submission" date="2004-12" db="PDB data bank">
        <title>Crystal structure of lactam utilization protein from Pyrococcus horikoshii OT3.</title>
        <authorList>
            <consortium name="RIKEN structural genomics initiative (RSGI)"/>
        </authorList>
    </citation>
    <scope>X-RAY CRYSTALLOGRAPHY (1.7 ANGSTROMS)</scope>
</reference>
<gene>
    <name evidence="1" type="primary">pxpA</name>
    <name type="ordered locus">PH0986</name>
</gene>
<comment type="function">
    <text evidence="1">Catalyzes the cleavage of 5-oxoproline to form L-glutamate coupled to the hydrolysis of ATP to ADP and inorganic phosphate.</text>
</comment>
<comment type="catalytic activity">
    <reaction evidence="1">
        <text>5-oxo-L-proline + ATP + 2 H2O = L-glutamate + ADP + phosphate + H(+)</text>
        <dbReference type="Rhea" id="RHEA:10348"/>
        <dbReference type="ChEBI" id="CHEBI:15377"/>
        <dbReference type="ChEBI" id="CHEBI:15378"/>
        <dbReference type="ChEBI" id="CHEBI:29985"/>
        <dbReference type="ChEBI" id="CHEBI:30616"/>
        <dbReference type="ChEBI" id="CHEBI:43474"/>
        <dbReference type="ChEBI" id="CHEBI:58402"/>
        <dbReference type="ChEBI" id="CHEBI:456216"/>
        <dbReference type="EC" id="3.5.2.9"/>
    </reaction>
</comment>
<comment type="subunit">
    <text evidence="1">Forms a complex composed of PxpA, PxpB and PxpC.</text>
</comment>
<comment type="similarity">
    <text evidence="1">Belongs to the LamB/PxpA family.</text>
</comment>
<keyword id="KW-0002">3D-structure</keyword>
<keyword id="KW-0067">ATP-binding</keyword>
<keyword id="KW-0378">Hydrolase</keyword>
<keyword id="KW-0547">Nucleotide-binding</keyword>
<name>PXPA_PYRHO</name>
<proteinExistence type="evidence at protein level"/>